<accession>Q8R1B5</accession>
<accession>Q96AW7</accession>
<dbReference type="EMBL" id="AY264290">
    <property type="protein sequence ID" value="AAP22133.1"/>
    <property type="molecule type" value="mRNA"/>
</dbReference>
<dbReference type="EMBL" id="AK044211">
    <property type="protein sequence ID" value="BAC31818.1"/>
    <property type="molecule type" value="mRNA"/>
</dbReference>
<dbReference type="EMBL" id="BC016632">
    <property type="protein sequence ID" value="AAH16632.1"/>
    <property type="molecule type" value="mRNA"/>
</dbReference>
<dbReference type="EMBL" id="BC024854">
    <property type="protein sequence ID" value="AAH24854.1"/>
    <property type="molecule type" value="mRNA"/>
</dbReference>
<dbReference type="EMBL" id="BC033343">
    <property type="protein sequence ID" value="AAH33343.1"/>
    <property type="molecule type" value="mRNA"/>
</dbReference>
<dbReference type="CCDS" id="CCDS23226.1"/>
<dbReference type="RefSeq" id="NP_666335.1">
    <property type="nucleotide sequence ID" value="NM_146223.3"/>
</dbReference>
<dbReference type="SMR" id="Q8R1B5"/>
<dbReference type="BioGRID" id="231656">
    <property type="interactions" value="4"/>
</dbReference>
<dbReference type="FunCoup" id="Q8R1B5">
    <property type="interactions" value="185"/>
</dbReference>
<dbReference type="STRING" id="10090.ENSMUSP00000046748"/>
<dbReference type="GlyGen" id="Q8R1B5">
    <property type="glycosylation" value="2 sites, 2 N-linked glycans (2 sites)"/>
</dbReference>
<dbReference type="PhosphoSitePlus" id="Q8R1B5"/>
<dbReference type="PaxDb" id="10090-ENSMUSP00000046748"/>
<dbReference type="PeptideAtlas" id="Q8R1B5"/>
<dbReference type="ProteomicsDB" id="283936"/>
<dbReference type="Antibodypedia" id="43203">
    <property type="antibodies" value="134 antibodies from 21 providers"/>
</dbReference>
<dbReference type="Ensembl" id="ENSMUST00000045068.10">
    <property type="protein sequence ID" value="ENSMUSP00000046748.9"/>
    <property type="gene ID" value="ENSMUSG00000039714.10"/>
</dbReference>
<dbReference type="GeneID" id="235415"/>
<dbReference type="KEGG" id="mmu:235415"/>
<dbReference type="UCSC" id="uc009pvg.2">
    <property type="organism name" value="mouse"/>
</dbReference>
<dbReference type="AGR" id="MGI:2384571"/>
<dbReference type="CTD" id="594855"/>
<dbReference type="MGI" id="MGI:2384571">
    <property type="gene designation" value="Cplx3"/>
</dbReference>
<dbReference type="VEuPathDB" id="HostDB:ENSMUSG00000039714"/>
<dbReference type="eggNOG" id="ENOG502QZ0D">
    <property type="taxonomic scope" value="Eukaryota"/>
</dbReference>
<dbReference type="GeneTree" id="ENSGT00950000182938"/>
<dbReference type="HOGENOM" id="CLU_141096_0_0_1"/>
<dbReference type="InParanoid" id="Q8R1B5"/>
<dbReference type="OMA" id="AEKCTVM"/>
<dbReference type="OrthoDB" id="9942329at2759"/>
<dbReference type="PhylomeDB" id="Q8R1B5"/>
<dbReference type="TreeFam" id="TF331867"/>
<dbReference type="BioGRID-ORCS" id="235415">
    <property type="hits" value="2 hits in 79 CRISPR screens"/>
</dbReference>
<dbReference type="ChiTaRS" id="Cplx3">
    <property type="organism name" value="mouse"/>
</dbReference>
<dbReference type="PRO" id="PR:Q8R1B5"/>
<dbReference type="Proteomes" id="UP000000589">
    <property type="component" value="Chromosome 9"/>
</dbReference>
<dbReference type="RNAct" id="Q8R1B5">
    <property type="molecule type" value="protein"/>
</dbReference>
<dbReference type="Bgee" id="ENSMUSG00000039714">
    <property type="expression patterns" value="Expressed in retinal neural layer and 23 other cell types or tissues"/>
</dbReference>
<dbReference type="ExpressionAtlas" id="Q8R1B5">
    <property type="expression patterns" value="baseline and differential"/>
</dbReference>
<dbReference type="GO" id="GO:0005829">
    <property type="term" value="C:cytosol"/>
    <property type="evidence" value="ECO:0000314"/>
    <property type="project" value="MGI"/>
</dbReference>
<dbReference type="GO" id="GO:0016020">
    <property type="term" value="C:membrane"/>
    <property type="evidence" value="ECO:0000314"/>
    <property type="project" value="UniProtKB"/>
</dbReference>
<dbReference type="GO" id="GO:0098684">
    <property type="term" value="C:photoreceptor ribbon synapse"/>
    <property type="evidence" value="ECO:0000314"/>
    <property type="project" value="SynGO"/>
</dbReference>
<dbReference type="GO" id="GO:0005886">
    <property type="term" value="C:plasma membrane"/>
    <property type="evidence" value="ECO:0000314"/>
    <property type="project" value="MGI"/>
</dbReference>
<dbReference type="GO" id="GO:0048787">
    <property type="term" value="C:presynaptic active zone membrane"/>
    <property type="evidence" value="ECO:0000314"/>
    <property type="project" value="SynGO"/>
</dbReference>
<dbReference type="GO" id="GO:0045202">
    <property type="term" value="C:synapse"/>
    <property type="evidence" value="ECO:0000314"/>
    <property type="project" value="MGI"/>
</dbReference>
<dbReference type="GO" id="GO:0030672">
    <property type="term" value="C:synaptic vesicle membrane"/>
    <property type="evidence" value="ECO:0000314"/>
    <property type="project" value="SynGO"/>
</dbReference>
<dbReference type="GO" id="GO:0005326">
    <property type="term" value="F:neurotransmitter transmembrane transporter activity"/>
    <property type="evidence" value="ECO:0000315"/>
    <property type="project" value="UniProtKB"/>
</dbReference>
<dbReference type="GO" id="GO:0000149">
    <property type="term" value="F:SNARE binding"/>
    <property type="evidence" value="ECO:0000314"/>
    <property type="project" value="MGI"/>
</dbReference>
<dbReference type="GO" id="GO:0019905">
    <property type="term" value="F:syntaxin binding"/>
    <property type="evidence" value="ECO:0007669"/>
    <property type="project" value="InterPro"/>
</dbReference>
<dbReference type="GO" id="GO:0030073">
    <property type="term" value="P:insulin secretion"/>
    <property type="evidence" value="ECO:0000315"/>
    <property type="project" value="UniProtKB"/>
</dbReference>
<dbReference type="GO" id="GO:0046928">
    <property type="term" value="P:regulation of neurotransmitter secretion"/>
    <property type="evidence" value="ECO:0000314"/>
    <property type="project" value="MGI"/>
</dbReference>
<dbReference type="GO" id="GO:0031630">
    <property type="term" value="P:regulation of synaptic vesicle fusion to presynaptic active zone membrane"/>
    <property type="evidence" value="ECO:0000314"/>
    <property type="project" value="SynGO"/>
</dbReference>
<dbReference type="GO" id="GO:0016079">
    <property type="term" value="P:synaptic vesicle exocytosis"/>
    <property type="evidence" value="ECO:0000315"/>
    <property type="project" value="UniProtKB"/>
</dbReference>
<dbReference type="GO" id="GO:0007601">
    <property type="term" value="P:visual perception"/>
    <property type="evidence" value="ECO:0007669"/>
    <property type="project" value="UniProtKB-KW"/>
</dbReference>
<dbReference type="CDD" id="cd22809">
    <property type="entry name" value="Complexin_NTD_CPLX_III_IV"/>
    <property type="match status" value="1"/>
</dbReference>
<dbReference type="Gene3D" id="1.20.5.580">
    <property type="entry name" value="Single Helix bin"/>
    <property type="match status" value="1"/>
</dbReference>
<dbReference type="InterPro" id="IPR008849">
    <property type="entry name" value="Synaphin"/>
</dbReference>
<dbReference type="PANTHER" id="PTHR16705">
    <property type="entry name" value="COMPLEXIN"/>
    <property type="match status" value="1"/>
</dbReference>
<dbReference type="PANTHER" id="PTHR16705:SF5">
    <property type="entry name" value="COMPLEXIN-3"/>
    <property type="match status" value="1"/>
</dbReference>
<dbReference type="Pfam" id="PF05835">
    <property type="entry name" value="Synaphin"/>
    <property type="match status" value="1"/>
</dbReference>
<feature type="chain" id="PRO_0000239273" description="Complexin-3">
    <location>
        <begin position="1"/>
        <end position="155"/>
    </location>
</feature>
<feature type="propeptide" id="PRO_0000240234" description="Removed in mature form">
    <location>
        <begin position="156"/>
        <end position="158"/>
    </location>
</feature>
<feature type="region of interest" description="Disordered" evidence="2">
    <location>
        <begin position="14"/>
        <end position="47"/>
    </location>
</feature>
<feature type="coiled-coil region" evidence="1">
    <location>
        <begin position="39"/>
        <end position="74"/>
    </location>
</feature>
<feature type="compositionally biased region" description="Basic and acidic residues" evidence="2">
    <location>
        <begin position="23"/>
        <end position="33"/>
    </location>
</feature>
<feature type="modified residue" description="Cysteine methyl ester" evidence="3">
    <location>
        <position position="155"/>
    </location>
</feature>
<feature type="lipid moiety-binding region" description="S-farnesyl cysteine" evidence="3">
    <location>
        <position position="155"/>
    </location>
</feature>
<name>CPLX3_MOUSE</name>
<protein>
    <recommendedName>
        <fullName>Complexin-3</fullName>
    </recommendedName>
    <alternativeName>
        <fullName>Complexin III</fullName>
        <shortName>CPX III</shortName>
    </alternativeName>
</protein>
<evidence type="ECO:0000255" key="1"/>
<evidence type="ECO:0000256" key="2">
    <source>
        <dbReference type="SAM" id="MobiDB-lite"/>
    </source>
</evidence>
<evidence type="ECO:0000269" key="3">
    <source>
    </source>
</evidence>
<evidence type="ECO:0000269" key="4">
    <source>
    </source>
</evidence>
<evidence type="ECO:0000269" key="5">
    <source>
    </source>
</evidence>
<evidence type="ECO:0000269" key="6">
    <source>
    </source>
</evidence>
<evidence type="ECO:0000305" key="7"/>
<organism>
    <name type="scientific">Mus musculus</name>
    <name type="common">Mouse</name>
    <dbReference type="NCBI Taxonomy" id="10090"/>
    <lineage>
        <taxon>Eukaryota</taxon>
        <taxon>Metazoa</taxon>
        <taxon>Chordata</taxon>
        <taxon>Craniata</taxon>
        <taxon>Vertebrata</taxon>
        <taxon>Euteleostomi</taxon>
        <taxon>Mammalia</taxon>
        <taxon>Eutheria</taxon>
        <taxon>Euarchontoglires</taxon>
        <taxon>Glires</taxon>
        <taxon>Rodentia</taxon>
        <taxon>Myomorpha</taxon>
        <taxon>Muroidea</taxon>
        <taxon>Muridae</taxon>
        <taxon>Murinae</taxon>
        <taxon>Mus</taxon>
        <taxon>Mus</taxon>
    </lineage>
</organism>
<keyword id="KW-1003">Cell membrane</keyword>
<keyword id="KW-0175">Coiled coil</keyword>
<keyword id="KW-0268">Exocytosis</keyword>
<keyword id="KW-0449">Lipoprotein</keyword>
<keyword id="KW-0472">Membrane</keyword>
<keyword id="KW-0488">Methylation</keyword>
<keyword id="KW-0532">Neurotransmitter transport</keyword>
<keyword id="KW-0636">Prenylation</keyword>
<keyword id="KW-1185">Reference proteome</keyword>
<keyword id="KW-0716">Sensory transduction</keyword>
<keyword id="KW-0770">Synapse</keyword>
<keyword id="KW-0813">Transport</keyword>
<keyword id="KW-0844">Vision</keyword>
<comment type="function">
    <text evidence="3 4 5 6">Complexin that regulates SNARE protein complex-mediated synaptic vesicle fusion (PubMed:19386896). Required for the maintenance of synaptic ultrastructure in the adult retina (PubMed:19386896). Positively regulates synaptic transmission through synaptic vesicle availability and exocytosis of neurotransmitters at photoreceptor ribbon synapses in the retina (PubMed:15911881, PubMed:19386896, PubMed:27335398). Suppresses tonic photoreceptor activity and baseline 'noise' by suppression of Ca(2+) vesicle tonic release and the facilitation of evoked synchronous and asynchronous Ca(2+) vesicle release (PubMed:22694764, PubMed:27335398).</text>
</comment>
<comment type="subunit">
    <text evidence="3">Binds to the SNARE core complex containing SNAP25, VAMP2 and STX1A.</text>
</comment>
<comment type="subcellular location">
    <subcellularLocation>
        <location evidence="3 5">Synapse</location>
    </subcellularLocation>
    <subcellularLocation>
        <location evidence="3">Cell membrane</location>
        <topology evidence="3">Lipid-anchor</topology>
    </subcellularLocation>
    <text evidence="3 5">Enriched at the synaptic terminal (PubMed:15911881). Localized at glycinergic synaptic contacts of AII amacrine cells with OFF cone bipolar cells in the OFF sublamina of the retina inner nuclear layer (PubMed:22694764).</text>
</comment>
<comment type="tissue specificity">
    <text evidence="3 4 5">Present in many brain regions, including hippocampus and cerebellum (at protein level) (PubMed:15911881). Expressed in the retina (at protein level) (PubMed:15911881, PubMed:19386896). Expressed in retinal amacrine cells (at protein level) (PubMed:19386896, PubMed:22694764). Expressed in retinal photoreceptor ribbon synapses (PubMed:19386896). Expressed in the retinal inner nuclear layer, at bipolar cells (at protein level) (PubMed:22694764). Expressed in cone photoreceptor synaptic terminals (at protein level) (PubMed:22694764).</text>
</comment>
<comment type="developmental stage">
    <text evidence="3">In the brain, expression starts at P6 and increases to reach a plateau at P20.</text>
</comment>
<comment type="PTM">
    <text evidence="3">Farnesylation mediates presynaptic targeting.</text>
</comment>
<comment type="disruption phenotype">
    <text evidence="4 5 6">Knockout mice are generally phenotypically normal, viable, and fertile (PubMed:19386896). Normal overall retina structure and morphology of the outer plexiform layer (OPL) and inner plexiform layer (IPL) (PubMed:19386896). Abundance and distribution of synaptic proteins remain consistent (PubMed:19386896). Reduced retinal synaptic transmission and inner retinal processing (PubMed:19386896). Cplx3 and Cplx4 double knockout mice are generally phenotypically normal, viable, and fertile, however show disordered morphology of the OPL and vision perturbation when compared to single knockout mice (PubMed:19386896). Cplx3 and Cplx4 double knockout mice show evidence of mild vision perturbation, with a reduction in the number of morphologically normal anchored presynaptic ribbon synapses and a decrease in controlled neurotransmitter release at photoreceptor ribbon synapses (PubMed:19386896). Cplx3 and Cplx4 double knockout mice show reduced response and sensitivity of ON and OFF ganglion cell response as a result of disrupted synaptic transmission (PubMed:22694764). Cplx3 and Cplx4 double knockout mice show a greater variance in photoreceptor activity response and a decrease in sustained response, this is caused by an increase in release and fusion of synaptic vesicles in an asynchronous manner, this is particularly evident following multiple stimuli (PubMed:27335398).</text>
</comment>
<comment type="similarity">
    <text evidence="7">Belongs to the complexin/synaphin family.</text>
</comment>
<reference key="1">
    <citation type="journal article" date="2005" name="J. Cell Biol.">
        <title>Structurally and functionally unique complexins at retinal ribbon synapses.</title>
        <authorList>
            <person name="Reim K."/>
            <person name="Wegmeyer H."/>
            <person name="Brandstaetter J.H."/>
            <person name="Xue M."/>
            <person name="Rosenmund C."/>
            <person name="Dresbach T."/>
            <person name="Hofmann K."/>
            <person name="Brose N."/>
        </authorList>
    </citation>
    <scope>NUCLEOTIDE SEQUENCE [MRNA]</scope>
    <scope>FUNCTION</scope>
    <scope>SUBUNIT</scope>
    <scope>SUBCELLULAR LOCATION</scope>
    <scope>TISSUE SPECIFICITY</scope>
    <scope>DEVELOPMENTAL STAGE</scope>
    <scope>ISOPRENYLATION AT CYS-155</scope>
    <scope>METHYLATION AT CYS-155</scope>
    <source>
        <strain>BALB/cJ</strain>
        <tissue>Brain</tissue>
    </source>
</reference>
<reference key="2">
    <citation type="journal article" date="2005" name="Science">
        <title>The transcriptional landscape of the mammalian genome.</title>
        <authorList>
            <person name="Carninci P."/>
            <person name="Kasukawa T."/>
            <person name="Katayama S."/>
            <person name="Gough J."/>
            <person name="Frith M.C."/>
            <person name="Maeda N."/>
            <person name="Oyama R."/>
            <person name="Ravasi T."/>
            <person name="Lenhard B."/>
            <person name="Wells C."/>
            <person name="Kodzius R."/>
            <person name="Shimokawa K."/>
            <person name="Bajic V.B."/>
            <person name="Brenner S.E."/>
            <person name="Batalov S."/>
            <person name="Forrest A.R."/>
            <person name="Zavolan M."/>
            <person name="Davis M.J."/>
            <person name="Wilming L.G."/>
            <person name="Aidinis V."/>
            <person name="Allen J.E."/>
            <person name="Ambesi-Impiombato A."/>
            <person name="Apweiler R."/>
            <person name="Aturaliya R.N."/>
            <person name="Bailey T.L."/>
            <person name="Bansal M."/>
            <person name="Baxter L."/>
            <person name="Beisel K.W."/>
            <person name="Bersano T."/>
            <person name="Bono H."/>
            <person name="Chalk A.M."/>
            <person name="Chiu K.P."/>
            <person name="Choudhary V."/>
            <person name="Christoffels A."/>
            <person name="Clutterbuck D.R."/>
            <person name="Crowe M.L."/>
            <person name="Dalla E."/>
            <person name="Dalrymple B.P."/>
            <person name="de Bono B."/>
            <person name="Della Gatta G."/>
            <person name="di Bernardo D."/>
            <person name="Down T."/>
            <person name="Engstrom P."/>
            <person name="Fagiolini M."/>
            <person name="Faulkner G."/>
            <person name="Fletcher C.F."/>
            <person name="Fukushima T."/>
            <person name="Furuno M."/>
            <person name="Futaki S."/>
            <person name="Gariboldi M."/>
            <person name="Georgii-Hemming P."/>
            <person name="Gingeras T.R."/>
            <person name="Gojobori T."/>
            <person name="Green R.E."/>
            <person name="Gustincich S."/>
            <person name="Harbers M."/>
            <person name="Hayashi Y."/>
            <person name="Hensch T.K."/>
            <person name="Hirokawa N."/>
            <person name="Hill D."/>
            <person name="Huminiecki L."/>
            <person name="Iacono M."/>
            <person name="Ikeo K."/>
            <person name="Iwama A."/>
            <person name="Ishikawa T."/>
            <person name="Jakt M."/>
            <person name="Kanapin A."/>
            <person name="Katoh M."/>
            <person name="Kawasawa Y."/>
            <person name="Kelso J."/>
            <person name="Kitamura H."/>
            <person name="Kitano H."/>
            <person name="Kollias G."/>
            <person name="Krishnan S.P."/>
            <person name="Kruger A."/>
            <person name="Kummerfeld S.K."/>
            <person name="Kurochkin I.V."/>
            <person name="Lareau L.F."/>
            <person name="Lazarevic D."/>
            <person name="Lipovich L."/>
            <person name="Liu J."/>
            <person name="Liuni S."/>
            <person name="McWilliam S."/>
            <person name="Madan Babu M."/>
            <person name="Madera M."/>
            <person name="Marchionni L."/>
            <person name="Matsuda H."/>
            <person name="Matsuzawa S."/>
            <person name="Miki H."/>
            <person name="Mignone F."/>
            <person name="Miyake S."/>
            <person name="Morris K."/>
            <person name="Mottagui-Tabar S."/>
            <person name="Mulder N."/>
            <person name="Nakano N."/>
            <person name="Nakauchi H."/>
            <person name="Ng P."/>
            <person name="Nilsson R."/>
            <person name="Nishiguchi S."/>
            <person name="Nishikawa S."/>
            <person name="Nori F."/>
            <person name="Ohara O."/>
            <person name="Okazaki Y."/>
            <person name="Orlando V."/>
            <person name="Pang K.C."/>
            <person name="Pavan W.J."/>
            <person name="Pavesi G."/>
            <person name="Pesole G."/>
            <person name="Petrovsky N."/>
            <person name="Piazza S."/>
            <person name="Reed J."/>
            <person name="Reid J.F."/>
            <person name="Ring B.Z."/>
            <person name="Ringwald M."/>
            <person name="Rost B."/>
            <person name="Ruan Y."/>
            <person name="Salzberg S.L."/>
            <person name="Sandelin A."/>
            <person name="Schneider C."/>
            <person name="Schoenbach C."/>
            <person name="Sekiguchi K."/>
            <person name="Semple C.A."/>
            <person name="Seno S."/>
            <person name="Sessa L."/>
            <person name="Sheng Y."/>
            <person name="Shibata Y."/>
            <person name="Shimada H."/>
            <person name="Shimada K."/>
            <person name="Silva D."/>
            <person name="Sinclair B."/>
            <person name="Sperling S."/>
            <person name="Stupka E."/>
            <person name="Sugiura K."/>
            <person name="Sultana R."/>
            <person name="Takenaka Y."/>
            <person name="Taki K."/>
            <person name="Tammoja K."/>
            <person name="Tan S.L."/>
            <person name="Tang S."/>
            <person name="Taylor M.S."/>
            <person name="Tegner J."/>
            <person name="Teichmann S.A."/>
            <person name="Ueda H.R."/>
            <person name="van Nimwegen E."/>
            <person name="Verardo R."/>
            <person name="Wei C.L."/>
            <person name="Yagi K."/>
            <person name="Yamanishi H."/>
            <person name="Zabarovsky E."/>
            <person name="Zhu S."/>
            <person name="Zimmer A."/>
            <person name="Hide W."/>
            <person name="Bult C."/>
            <person name="Grimmond S.M."/>
            <person name="Teasdale R.D."/>
            <person name="Liu E.T."/>
            <person name="Brusic V."/>
            <person name="Quackenbush J."/>
            <person name="Wahlestedt C."/>
            <person name="Mattick J.S."/>
            <person name="Hume D.A."/>
            <person name="Kai C."/>
            <person name="Sasaki D."/>
            <person name="Tomaru Y."/>
            <person name="Fukuda S."/>
            <person name="Kanamori-Katayama M."/>
            <person name="Suzuki M."/>
            <person name="Aoki J."/>
            <person name="Arakawa T."/>
            <person name="Iida J."/>
            <person name="Imamura K."/>
            <person name="Itoh M."/>
            <person name="Kato T."/>
            <person name="Kawaji H."/>
            <person name="Kawagashira N."/>
            <person name="Kawashima T."/>
            <person name="Kojima M."/>
            <person name="Kondo S."/>
            <person name="Konno H."/>
            <person name="Nakano K."/>
            <person name="Ninomiya N."/>
            <person name="Nishio T."/>
            <person name="Okada M."/>
            <person name="Plessy C."/>
            <person name="Shibata K."/>
            <person name="Shiraki T."/>
            <person name="Suzuki S."/>
            <person name="Tagami M."/>
            <person name="Waki K."/>
            <person name="Watahiki A."/>
            <person name="Okamura-Oho Y."/>
            <person name="Suzuki H."/>
            <person name="Kawai J."/>
            <person name="Hayashizaki Y."/>
        </authorList>
    </citation>
    <scope>NUCLEOTIDE SEQUENCE [LARGE SCALE MRNA]</scope>
    <source>
        <strain>C57BL/6J</strain>
        <tissue>Retina</tissue>
    </source>
</reference>
<reference key="3">
    <citation type="journal article" date="2004" name="Genome Res.">
        <title>The status, quality, and expansion of the NIH full-length cDNA project: the Mammalian Gene Collection (MGC).</title>
        <authorList>
            <consortium name="The MGC Project Team"/>
        </authorList>
    </citation>
    <scope>NUCLEOTIDE SEQUENCE [LARGE SCALE MRNA]</scope>
    <source>
        <tissue>Eye</tissue>
    </source>
</reference>
<reference key="4">
    <citation type="journal article" date="2009" name="J. Cell Sci.">
        <title>Aberrant function and structure of retinal ribbon synapses in the absence of complexin 3 and complexin 4.</title>
        <authorList>
            <person name="Reim K."/>
            <person name="Regus-Leidig H."/>
            <person name="Ammermueller J."/>
            <person name="El-Kordi A."/>
            <person name="Radyushkin K."/>
            <person name="Ehrenreich H."/>
            <person name="Brandstaetter J.H."/>
            <person name="Brose N."/>
        </authorList>
    </citation>
    <scope>FUNCTION</scope>
    <scope>TISSUE SPECIFICITY</scope>
    <scope>DISRUPTION PHENOTYPE</scope>
</reference>
<reference key="5">
    <citation type="journal article" date="2010" name="Cell">
        <title>A tissue-specific atlas of mouse protein phosphorylation and expression.</title>
        <authorList>
            <person name="Huttlin E.L."/>
            <person name="Jedrychowski M.P."/>
            <person name="Elias J.E."/>
            <person name="Goswami T."/>
            <person name="Rad R."/>
            <person name="Beausoleil S.A."/>
            <person name="Villen J."/>
            <person name="Haas W."/>
            <person name="Sowa M.E."/>
            <person name="Gygi S.P."/>
        </authorList>
    </citation>
    <scope>IDENTIFICATION BY MASS SPECTROMETRY [LARGE SCALE ANALYSIS]</scope>
    <source>
        <tissue>Brain</tissue>
    </source>
</reference>
<reference key="6">
    <citation type="journal article" date="2012" name="Eur. J. Neurosci.">
        <title>The absence of Complexin 3 and Complexin 4 differentially impacts the ON and OFF pathways in mouse retina.</title>
        <authorList>
            <person name="Landgraf I."/>
            <person name="Muehlhans J."/>
            <person name="Dedek K."/>
            <person name="Reim K."/>
            <person name="Brandstaetter J.H."/>
            <person name="Ammermueller J."/>
        </authorList>
    </citation>
    <scope>FUNCTION</scope>
    <scope>SUBCELLULAR LOCATION</scope>
    <scope>TISSUE SPECIFICITY</scope>
    <scope>DISRUPTION PHENOTYPE</scope>
</reference>
<reference key="7">
    <citation type="journal article" date="2016" name="J. Neurosci.">
        <title>Functional Roles of Complexin 3 and Complexin 4 at Mouse Photoreceptor Ribbon Synapses.</title>
        <authorList>
            <person name="Babai N."/>
            <person name="Sendelbeck A."/>
            <person name="Regus-Leidig H."/>
            <person name="Fuchs M."/>
            <person name="Mertins J."/>
            <person name="Reim K."/>
            <person name="Brose N."/>
            <person name="Feigenspan A."/>
            <person name="Brandstaetter J.H."/>
        </authorList>
    </citation>
    <scope>FUNCTION</scope>
    <scope>DISRUPTION PHENOTYPE</scope>
</reference>
<gene>
    <name type="primary">Cplx3</name>
</gene>
<proteinExistence type="evidence at protein level"/>
<sequence>MAFMVKSMVGGQLKNLTGSLGGGEDKGDGDKSAAEAQGMSREEYEEYQKQLVEEKMERDAQFTQRKAERATLRSHFRDKYRLPKNETDESQIQLAGGDVELPRELAKMIEEDTEEEEDKASVLGQLASLPGLDLSSLKDKAQTTLGDLKQSAEKCHIM</sequence>